<reference key="1">
    <citation type="journal article" date="2003" name="Proc. Natl. Acad. Sci. U.S.A.">
        <title>The complete genome sequence of Mycobacterium bovis.</title>
        <authorList>
            <person name="Garnier T."/>
            <person name="Eiglmeier K."/>
            <person name="Camus J.-C."/>
            <person name="Medina N."/>
            <person name="Mansoor H."/>
            <person name="Pryor M."/>
            <person name="Duthoy S."/>
            <person name="Grondin S."/>
            <person name="Lacroix C."/>
            <person name="Monsempe C."/>
            <person name="Simon S."/>
            <person name="Harris B."/>
            <person name="Atkin R."/>
            <person name="Doggett J."/>
            <person name="Mayes R."/>
            <person name="Keating L."/>
            <person name="Wheeler P.R."/>
            <person name="Parkhill J."/>
            <person name="Barrell B.G."/>
            <person name="Cole S.T."/>
            <person name="Gordon S.V."/>
            <person name="Hewinson R.G."/>
        </authorList>
    </citation>
    <scope>NUCLEOTIDE SEQUENCE [LARGE SCALE GENOMIC DNA]</scope>
    <source>
        <strain>ATCC BAA-935 / AF2122/97</strain>
    </source>
</reference>
<reference key="2">
    <citation type="journal article" date="2017" name="Genome Announc.">
        <title>Updated reference genome sequence and annotation of Mycobacterium bovis AF2122/97.</title>
        <authorList>
            <person name="Malone K.M."/>
            <person name="Farrell D."/>
            <person name="Stuber T.P."/>
            <person name="Schubert O.T."/>
            <person name="Aebersold R."/>
            <person name="Robbe-Austerman S."/>
            <person name="Gordon S.V."/>
        </authorList>
    </citation>
    <scope>NUCLEOTIDE SEQUENCE [LARGE SCALE GENOMIC DNA]</scope>
    <scope>GENOME REANNOTATION</scope>
    <source>
        <strain>ATCC BAA-935 / AF2122/97</strain>
    </source>
</reference>
<organism>
    <name type="scientific">Mycobacterium bovis (strain ATCC BAA-935 / AF2122/97)</name>
    <dbReference type="NCBI Taxonomy" id="233413"/>
    <lineage>
        <taxon>Bacteria</taxon>
        <taxon>Bacillati</taxon>
        <taxon>Actinomycetota</taxon>
        <taxon>Actinomycetes</taxon>
        <taxon>Mycobacteriales</taxon>
        <taxon>Mycobacteriaceae</taxon>
        <taxon>Mycobacterium</taxon>
        <taxon>Mycobacterium tuberculosis complex</taxon>
    </lineage>
</organism>
<gene>
    <name type="ordered locus">BQ2027_MB1304C</name>
</gene>
<proteinExistence type="inferred from homology"/>
<protein>
    <recommendedName>
        <fullName>Uncharacterized ABC transporter ATP-binding protein Mb1304c</fullName>
    </recommendedName>
</protein>
<name>Y1304_MYCBO</name>
<accession>P0A4W5</accession>
<accession>A0A1R3XXV4</accession>
<accession>Q11046</accession>
<accession>X2BHH5</accession>
<keyword id="KW-0067">ATP-binding</keyword>
<keyword id="KW-1003">Cell membrane</keyword>
<keyword id="KW-0472">Membrane</keyword>
<keyword id="KW-0547">Nucleotide-binding</keyword>
<keyword id="KW-1185">Reference proteome</keyword>
<keyword id="KW-0812">Transmembrane</keyword>
<keyword id="KW-1133">Transmembrane helix</keyword>
<keyword id="KW-0813">Transport</keyword>
<comment type="subcellular location">
    <subcellularLocation>
        <location evidence="3">Cell membrane</location>
        <topology evidence="2">Multi-pass membrane protein</topology>
    </subcellularLocation>
</comment>
<comment type="similarity">
    <text evidence="3">Belongs to the ABC transporter superfamily. MsbA family.</text>
</comment>
<evidence type="ECO:0000255" key="1">
    <source>
        <dbReference type="PROSITE-ProRule" id="PRU00434"/>
    </source>
</evidence>
<evidence type="ECO:0000255" key="2">
    <source>
        <dbReference type="PROSITE-ProRule" id="PRU00441"/>
    </source>
</evidence>
<evidence type="ECO:0000305" key="3"/>
<feature type="chain" id="PRO_0000093263" description="Uncharacterized ABC transporter ATP-binding protein Mb1304c">
    <location>
        <begin position="1"/>
        <end position="582"/>
    </location>
</feature>
<feature type="transmembrane region" description="Helical" evidence="2">
    <location>
        <begin position="17"/>
        <end position="37"/>
    </location>
</feature>
<feature type="transmembrane region" description="Helical" evidence="2">
    <location>
        <begin position="57"/>
        <end position="77"/>
    </location>
</feature>
<feature type="transmembrane region" description="Helical" evidence="2">
    <location>
        <begin position="131"/>
        <end position="151"/>
    </location>
</feature>
<feature type="transmembrane region" description="Helical" evidence="2">
    <location>
        <begin position="156"/>
        <end position="176"/>
    </location>
</feature>
<feature type="transmembrane region" description="Helical" evidence="2">
    <location>
        <begin position="239"/>
        <end position="259"/>
    </location>
</feature>
<feature type="transmembrane region" description="Helical" evidence="2">
    <location>
        <begin position="271"/>
        <end position="291"/>
    </location>
</feature>
<feature type="domain" description="ABC transmembrane type-1" evidence="2">
    <location>
        <begin position="17"/>
        <end position="300"/>
    </location>
</feature>
<feature type="domain" description="ABC transporter" evidence="1">
    <location>
        <begin position="335"/>
        <end position="571"/>
    </location>
</feature>
<feature type="binding site" evidence="1">
    <location>
        <begin position="369"/>
        <end position="376"/>
    </location>
    <ligand>
        <name>ATP</name>
        <dbReference type="ChEBI" id="CHEBI:30616"/>
    </ligand>
</feature>
<sequence length="582" mass="62116">MLLALLRQHIRPYRRLVAMLMMLQLVSTLASLYLPTVNAAIVDDGVAKGDTATIVRLGAVMLGVTGLQVLCAIGAVYLGSRTGAGFGRDLRSAMFEHIITFSERETARFGAPTLLTRSTNDVRQILFLVQMTATVLVTAPIMCVGGIIMAIHQEAALTWLLLVSVPILAVANYWIISHMLPLFRRMQSLIDGINRVMRDQLSGVRVVRAFTREGYERDKFAQANTALSNAALSAGNWQALMLPVTTLTINASSVALIWFGGLRIDSGQMQVGSLIAFLSYFAQILMAVLMATMTLAVLPRASVCAERITEVLSTPAALGNPDNPKFPTDGVTGVVRLAGATFTYPGADCPVLQDISLTARPGTTTAIVGSTGSGKSTLVSLICRLYDVTAGAVLVDGIDVREYHTERLWSAIGLVPQRSYLFSGTVADNLRYGGGPDQVVTEQEMWEALRVAAADGFVQTDGLQTRVAQGGVNFSGGQRQRLAIARAVIRRPAIYVFDDAFSALDVHTDAKVHASLRQVSGDATIIVVTQRISNAAQADQVIVVDNGKIVGTGTHETLLADCPTYAEFAASQSLSATVGGVG</sequence>
<dbReference type="EMBL" id="LT708304">
    <property type="protein sequence ID" value="SIT99907.1"/>
    <property type="molecule type" value="Genomic_DNA"/>
</dbReference>
<dbReference type="RefSeq" id="NP_854958.1">
    <property type="nucleotide sequence ID" value="NC_002945.3"/>
</dbReference>
<dbReference type="RefSeq" id="WP_003406574.1">
    <property type="nucleotide sequence ID" value="NC_002945.4"/>
</dbReference>
<dbReference type="SMR" id="P0A4W5"/>
<dbReference type="KEGG" id="mbo:BQ2027_MB1304C"/>
<dbReference type="PATRIC" id="fig|233413.5.peg.1429"/>
<dbReference type="Proteomes" id="UP000001419">
    <property type="component" value="Chromosome"/>
</dbReference>
<dbReference type="GO" id="GO:0005886">
    <property type="term" value="C:plasma membrane"/>
    <property type="evidence" value="ECO:0007669"/>
    <property type="project" value="UniProtKB-SubCell"/>
</dbReference>
<dbReference type="GO" id="GO:0015421">
    <property type="term" value="F:ABC-type oligopeptide transporter activity"/>
    <property type="evidence" value="ECO:0007669"/>
    <property type="project" value="TreeGrafter"/>
</dbReference>
<dbReference type="GO" id="GO:0005524">
    <property type="term" value="F:ATP binding"/>
    <property type="evidence" value="ECO:0007669"/>
    <property type="project" value="UniProtKB-KW"/>
</dbReference>
<dbReference type="GO" id="GO:0016887">
    <property type="term" value="F:ATP hydrolysis activity"/>
    <property type="evidence" value="ECO:0007669"/>
    <property type="project" value="InterPro"/>
</dbReference>
<dbReference type="CDD" id="cd18548">
    <property type="entry name" value="ABC_6TM_Tm287_like"/>
    <property type="match status" value="1"/>
</dbReference>
<dbReference type="FunFam" id="1.20.1560.10:FF:000040">
    <property type="entry name" value="Multidrug ABC transporter ATP-binding protein"/>
    <property type="match status" value="1"/>
</dbReference>
<dbReference type="FunFam" id="3.40.50.300:FF:000854">
    <property type="entry name" value="Multidrug ABC transporter ATP-binding protein"/>
    <property type="match status" value="1"/>
</dbReference>
<dbReference type="Gene3D" id="1.20.1560.10">
    <property type="entry name" value="ABC transporter type 1, transmembrane domain"/>
    <property type="match status" value="1"/>
</dbReference>
<dbReference type="Gene3D" id="3.40.50.300">
    <property type="entry name" value="P-loop containing nucleotide triphosphate hydrolases"/>
    <property type="match status" value="1"/>
</dbReference>
<dbReference type="InterPro" id="IPR003593">
    <property type="entry name" value="AAA+_ATPase"/>
</dbReference>
<dbReference type="InterPro" id="IPR011527">
    <property type="entry name" value="ABC1_TM_dom"/>
</dbReference>
<dbReference type="InterPro" id="IPR036640">
    <property type="entry name" value="ABC1_TM_sf"/>
</dbReference>
<dbReference type="InterPro" id="IPR003439">
    <property type="entry name" value="ABC_transporter-like_ATP-bd"/>
</dbReference>
<dbReference type="InterPro" id="IPR017871">
    <property type="entry name" value="ABC_transporter-like_CS"/>
</dbReference>
<dbReference type="InterPro" id="IPR027417">
    <property type="entry name" value="P-loop_NTPase"/>
</dbReference>
<dbReference type="InterPro" id="IPR039421">
    <property type="entry name" value="Type_1_exporter"/>
</dbReference>
<dbReference type="PANTHER" id="PTHR43394:SF1">
    <property type="entry name" value="ATP-BINDING CASSETTE SUB-FAMILY B MEMBER 10, MITOCHONDRIAL"/>
    <property type="match status" value="1"/>
</dbReference>
<dbReference type="PANTHER" id="PTHR43394">
    <property type="entry name" value="ATP-DEPENDENT PERMEASE MDL1, MITOCHONDRIAL"/>
    <property type="match status" value="1"/>
</dbReference>
<dbReference type="Pfam" id="PF00664">
    <property type="entry name" value="ABC_membrane"/>
    <property type="match status" value="1"/>
</dbReference>
<dbReference type="Pfam" id="PF00005">
    <property type="entry name" value="ABC_tran"/>
    <property type="match status" value="1"/>
</dbReference>
<dbReference type="SMART" id="SM00382">
    <property type="entry name" value="AAA"/>
    <property type="match status" value="1"/>
</dbReference>
<dbReference type="SUPFAM" id="SSF90123">
    <property type="entry name" value="ABC transporter transmembrane region"/>
    <property type="match status" value="1"/>
</dbReference>
<dbReference type="SUPFAM" id="SSF52540">
    <property type="entry name" value="P-loop containing nucleoside triphosphate hydrolases"/>
    <property type="match status" value="1"/>
</dbReference>
<dbReference type="PROSITE" id="PS50929">
    <property type="entry name" value="ABC_TM1F"/>
    <property type="match status" value="1"/>
</dbReference>
<dbReference type="PROSITE" id="PS00211">
    <property type="entry name" value="ABC_TRANSPORTER_1"/>
    <property type="match status" value="2"/>
</dbReference>
<dbReference type="PROSITE" id="PS50893">
    <property type="entry name" value="ABC_TRANSPORTER_2"/>
    <property type="match status" value="1"/>
</dbReference>